<organism>
    <name type="scientific">Brucella suis biovar 1 (strain 1330)</name>
    <dbReference type="NCBI Taxonomy" id="204722"/>
    <lineage>
        <taxon>Bacteria</taxon>
        <taxon>Pseudomonadati</taxon>
        <taxon>Pseudomonadota</taxon>
        <taxon>Alphaproteobacteria</taxon>
        <taxon>Hyphomicrobiales</taxon>
        <taxon>Brucellaceae</taxon>
        <taxon>Brucella/Ochrobactrum group</taxon>
        <taxon>Brucella</taxon>
    </lineage>
</organism>
<sequence length="390" mass="41840">MAAGRGERAGQSAEGPKQYRLIGAEAVLARTLRAFTDCPLIGTIAVVIHPDDHALYRRAVPEKHENVILVTGGPTRQESTRLGLLALKDEAPQYVLIHDGVRPFIGQDLLERIIANLTPDNGVLPALAVPDTLKRAAADGMVETTISRTGLFAAQTPQAFPYAPILDAHEKAFAINRTDFTDDAAIAEWQEIAVRIIEGSADNTKLTWAKDIEMADKRLRQDHAVFPDIRTGNGYDVHSFEPGDHVTLCGVKIPHEAKLNGHSDADVALHALTDALLATRGAGDIGTHFPPSDSQWKGAASRIFIEHAAKIVREAGGRIANVDVTLISEAPKIGPHRAAMTQALCDMLGIAADRVSIKATTNEKLGFVGRREGIAAIATATVIYPGEVPE</sequence>
<comment type="function">
    <text evidence="1">Bifunctional enzyme that catalyzes the formation of 4-diphosphocytidyl-2-C-methyl-D-erythritol from CTP and 2-C-methyl-D-erythritol 4-phosphate (MEP) (IspD), and catalyzes the conversion of 4-diphosphocytidyl-2-C-methyl-D-erythritol 2-phosphate (CDP-ME2P) to 2-C-methyl-D-erythritol 2,4-cyclodiphosphate (ME-CPP) with a corresponding release of cytidine 5-monophosphate (CMP) (IspF).</text>
</comment>
<comment type="catalytic activity">
    <reaction evidence="1">
        <text>2-C-methyl-D-erythritol 4-phosphate + CTP + H(+) = 4-CDP-2-C-methyl-D-erythritol + diphosphate</text>
        <dbReference type="Rhea" id="RHEA:13429"/>
        <dbReference type="ChEBI" id="CHEBI:15378"/>
        <dbReference type="ChEBI" id="CHEBI:33019"/>
        <dbReference type="ChEBI" id="CHEBI:37563"/>
        <dbReference type="ChEBI" id="CHEBI:57823"/>
        <dbReference type="ChEBI" id="CHEBI:58262"/>
        <dbReference type="EC" id="2.7.7.60"/>
    </reaction>
</comment>
<comment type="catalytic activity">
    <reaction evidence="1">
        <text>4-CDP-2-C-methyl-D-erythritol 2-phosphate = 2-C-methyl-D-erythritol 2,4-cyclic diphosphate + CMP</text>
        <dbReference type="Rhea" id="RHEA:23864"/>
        <dbReference type="ChEBI" id="CHEBI:57919"/>
        <dbReference type="ChEBI" id="CHEBI:58483"/>
        <dbReference type="ChEBI" id="CHEBI:60377"/>
        <dbReference type="EC" id="4.6.1.12"/>
    </reaction>
</comment>
<comment type="cofactor">
    <cofactor evidence="1">
        <name>a divalent metal cation</name>
        <dbReference type="ChEBI" id="CHEBI:60240"/>
    </cofactor>
</comment>
<comment type="pathway">
    <text evidence="1">Isoprenoid biosynthesis; isopentenyl diphosphate biosynthesis via DXP pathway; isopentenyl diphosphate from 1-deoxy-D-xylulose 5-phosphate: step 2/6.</text>
</comment>
<comment type="pathway">
    <text evidence="1">Isoprenoid biosynthesis; isopentenyl diphosphate biosynthesis via DXP pathway; isopentenyl diphosphate from 1-deoxy-D-xylulose 5-phosphate: step 4/6.</text>
</comment>
<comment type="similarity">
    <text evidence="1">In the N-terminal section; belongs to the IspD/TarI cytidylyltransferase family. IspD subfamily.</text>
</comment>
<comment type="similarity">
    <text evidence="1">In the C-terminal section; belongs to the IspF family.</text>
</comment>
<comment type="sequence caution" evidence="2">
    <conflict type="erroneous initiation">
        <sequence resource="EMBL-CDS" id="AAN30040"/>
    </conflict>
    <text>Truncated N-terminus.</text>
</comment>
<comment type="sequence caution" evidence="2">
    <conflict type="erroneous initiation">
        <sequence resource="EMBL-CDS" id="AEM18458"/>
    </conflict>
    <text>Extended N-terminus.</text>
</comment>
<name>ISPDF_BRUSU</name>
<dbReference type="EC" id="2.7.7.60" evidence="1"/>
<dbReference type="EC" id="4.6.1.12" evidence="1"/>
<dbReference type="EMBL" id="AE014291">
    <property type="protein sequence ID" value="AAN30040.1"/>
    <property type="status" value="ALT_INIT"/>
    <property type="molecule type" value="Genomic_DNA"/>
</dbReference>
<dbReference type="EMBL" id="CP002997">
    <property type="protein sequence ID" value="AEM18458.1"/>
    <property type="status" value="ALT_INIT"/>
    <property type="molecule type" value="Genomic_DNA"/>
</dbReference>
<dbReference type="SMR" id="Q8G0H4"/>
<dbReference type="KEGG" id="bms:BR1120"/>
<dbReference type="KEGG" id="bsi:BS1330_I1116"/>
<dbReference type="HOGENOM" id="CLU_042800_1_1_5"/>
<dbReference type="UniPathway" id="UPA00056">
    <property type="reaction ID" value="UER00093"/>
</dbReference>
<dbReference type="UniPathway" id="UPA00056">
    <property type="reaction ID" value="UER00095"/>
</dbReference>
<dbReference type="Proteomes" id="UP000007104">
    <property type="component" value="Chromosome I"/>
</dbReference>
<dbReference type="GO" id="GO:0008685">
    <property type="term" value="F:2-C-methyl-D-erythritol 2,4-cyclodiphosphate synthase activity"/>
    <property type="evidence" value="ECO:0007669"/>
    <property type="project" value="UniProtKB-UniRule"/>
</dbReference>
<dbReference type="GO" id="GO:0050518">
    <property type="term" value="F:2-C-methyl-D-erythritol 4-phosphate cytidylyltransferase activity"/>
    <property type="evidence" value="ECO:0007669"/>
    <property type="project" value="UniProtKB-UniRule"/>
</dbReference>
<dbReference type="GO" id="GO:0046872">
    <property type="term" value="F:metal ion binding"/>
    <property type="evidence" value="ECO:0007669"/>
    <property type="project" value="UniProtKB-KW"/>
</dbReference>
<dbReference type="GO" id="GO:0019288">
    <property type="term" value="P:isopentenyl diphosphate biosynthetic process, methylerythritol 4-phosphate pathway"/>
    <property type="evidence" value="ECO:0007669"/>
    <property type="project" value="UniProtKB-UniRule"/>
</dbReference>
<dbReference type="GO" id="GO:0016114">
    <property type="term" value="P:terpenoid biosynthetic process"/>
    <property type="evidence" value="ECO:0007669"/>
    <property type="project" value="InterPro"/>
</dbReference>
<dbReference type="CDD" id="cd02516">
    <property type="entry name" value="CDP-ME_synthetase"/>
    <property type="match status" value="1"/>
</dbReference>
<dbReference type="CDD" id="cd00554">
    <property type="entry name" value="MECDP_synthase"/>
    <property type="match status" value="1"/>
</dbReference>
<dbReference type="FunFam" id="3.90.550.10:FF:000003">
    <property type="entry name" value="2-C-methyl-D-erythritol 4-phosphate cytidylyltransferase"/>
    <property type="match status" value="1"/>
</dbReference>
<dbReference type="Gene3D" id="3.30.1330.50">
    <property type="entry name" value="2-C-methyl-D-erythritol 2,4-cyclodiphosphate synthase"/>
    <property type="match status" value="1"/>
</dbReference>
<dbReference type="Gene3D" id="3.90.550.10">
    <property type="entry name" value="Spore Coat Polysaccharide Biosynthesis Protein SpsA, Chain A"/>
    <property type="match status" value="1"/>
</dbReference>
<dbReference type="HAMAP" id="MF_01520">
    <property type="entry name" value="IspDF"/>
    <property type="match status" value="1"/>
</dbReference>
<dbReference type="HAMAP" id="MF_00107">
    <property type="entry name" value="IspF"/>
    <property type="match status" value="1"/>
</dbReference>
<dbReference type="InterPro" id="IPR001228">
    <property type="entry name" value="IspD"/>
</dbReference>
<dbReference type="InterPro" id="IPR026596">
    <property type="entry name" value="IspD/F"/>
</dbReference>
<dbReference type="InterPro" id="IPR034683">
    <property type="entry name" value="IspD/TarI"/>
</dbReference>
<dbReference type="InterPro" id="IPR018294">
    <property type="entry name" value="ISPD_synthase_CS"/>
</dbReference>
<dbReference type="InterPro" id="IPR003526">
    <property type="entry name" value="MECDP_synthase"/>
</dbReference>
<dbReference type="InterPro" id="IPR020555">
    <property type="entry name" value="MECDP_synthase_CS"/>
</dbReference>
<dbReference type="InterPro" id="IPR036571">
    <property type="entry name" value="MECDP_synthase_sf"/>
</dbReference>
<dbReference type="InterPro" id="IPR029044">
    <property type="entry name" value="Nucleotide-diphossugar_trans"/>
</dbReference>
<dbReference type="NCBIfam" id="TIGR00453">
    <property type="entry name" value="ispD"/>
    <property type="match status" value="1"/>
</dbReference>
<dbReference type="NCBIfam" id="TIGR00151">
    <property type="entry name" value="ispF"/>
    <property type="match status" value="1"/>
</dbReference>
<dbReference type="NCBIfam" id="NF006899">
    <property type="entry name" value="PRK09382.1"/>
    <property type="match status" value="1"/>
</dbReference>
<dbReference type="PANTHER" id="PTHR43181">
    <property type="entry name" value="2-C-METHYL-D-ERYTHRITOL 2,4-CYCLODIPHOSPHATE SYNTHASE, CHLOROPLASTIC"/>
    <property type="match status" value="1"/>
</dbReference>
<dbReference type="PANTHER" id="PTHR43181:SF1">
    <property type="entry name" value="2-C-METHYL-D-ERYTHRITOL 2,4-CYCLODIPHOSPHATE SYNTHASE, CHLOROPLASTIC"/>
    <property type="match status" value="1"/>
</dbReference>
<dbReference type="Pfam" id="PF01128">
    <property type="entry name" value="IspD"/>
    <property type="match status" value="1"/>
</dbReference>
<dbReference type="Pfam" id="PF02542">
    <property type="entry name" value="YgbB"/>
    <property type="match status" value="1"/>
</dbReference>
<dbReference type="SUPFAM" id="SSF69765">
    <property type="entry name" value="IpsF-like"/>
    <property type="match status" value="1"/>
</dbReference>
<dbReference type="SUPFAM" id="SSF53448">
    <property type="entry name" value="Nucleotide-diphospho-sugar transferases"/>
    <property type="match status" value="1"/>
</dbReference>
<dbReference type="PROSITE" id="PS01295">
    <property type="entry name" value="ISPD"/>
    <property type="match status" value="1"/>
</dbReference>
<dbReference type="PROSITE" id="PS01350">
    <property type="entry name" value="ISPF"/>
    <property type="match status" value="1"/>
</dbReference>
<accession>Q8G0H4</accession>
<accession>G0KA42</accession>
<proteinExistence type="inferred from homology"/>
<keyword id="KW-0414">Isoprene biosynthesis</keyword>
<keyword id="KW-0456">Lyase</keyword>
<keyword id="KW-0479">Metal-binding</keyword>
<keyword id="KW-0511">Multifunctional enzyme</keyword>
<keyword id="KW-0548">Nucleotidyltransferase</keyword>
<keyword id="KW-0808">Transferase</keyword>
<reference key="1">
    <citation type="journal article" date="2002" name="Proc. Natl. Acad. Sci. U.S.A.">
        <title>The Brucella suis genome reveals fundamental similarities between animal and plant pathogens and symbionts.</title>
        <authorList>
            <person name="Paulsen I.T."/>
            <person name="Seshadri R."/>
            <person name="Nelson K.E."/>
            <person name="Eisen J.A."/>
            <person name="Heidelberg J.F."/>
            <person name="Read T.D."/>
            <person name="Dodson R.J."/>
            <person name="Umayam L.A."/>
            <person name="Brinkac L.M."/>
            <person name="Beanan M.J."/>
            <person name="Daugherty S.C."/>
            <person name="DeBoy R.T."/>
            <person name="Durkin A.S."/>
            <person name="Kolonay J.F."/>
            <person name="Madupu R."/>
            <person name="Nelson W.C."/>
            <person name="Ayodeji B."/>
            <person name="Kraul M."/>
            <person name="Shetty J."/>
            <person name="Malek J.A."/>
            <person name="Van Aken S.E."/>
            <person name="Riedmuller S."/>
            <person name="Tettelin H."/>
            <person name="Gill S.R."/>
            <person name="White O."/>
            <person name="Salzberg S.L."/>
            <person name="Hoover D.L."/>
            <person name="Lindler L.E."/>
            <person name="Halling S.M."/>
            <person name="Boyle S.M."/>
            <person name="Fraser C.M."/>
        </authorList>
    </citation>
    <scope>NUCLEOTIDE SEQUENCE [LARGE SCALE GENOMIC DNA]</scope>
    <source>
        <strain>1330</strain>
    </source>
</reference>
<reference key="2">
    <citation type="journal article" date="2011" name="J. Bacteriol.">
        <title>Revised genome sequence of Brucella suis 1330.</title>
        <authorList>
            <person name="Tae H."/>
            <person name="Shallom S."/>
            <person name="Settlage R."/>
            <person name="Preston D."/>
            <person name="Adams L.G."/>
            <person name="Garner H.R."/>
        </authorList>
    </citation>
    <scope>NUCLEOTIDE SEQUENCE [LARGE SCALE GENOMIC DNA]</scope>
    <source>
        <strain>1330</strain>
    </source>
</reference>
<protein>
    <recommendedName>
        <fullName evidence="1">Bifunctional enzyme IspD/IspF</fullName>
    </recommendedName>
    <domain>
        <recommendedName>
            <fullName evidence="1">2-C-methyl-D-erythritol 4-phosphate cytidylyltransferase</fullName>
            <ecNumber evidence="1">2.7.7.60</ecNumber>
        </recommendedName>
        <alternativeName>
            <fullName evidence="1">4-diphosphocytidyl-2C-methyl-D-erythritol synthase</fullName>
        </alternativeName>
        <alternativeName>
            <fullName evidence="1">MEP cytidylyltransferase</fullName>
            <shortName evidence="1">MCT</shortName>
        </alternativeName>
    </domain>
    <domain>
        <recommendedName>
            <fullName evidence="1">2-C-methyl-D-erythritol 2,4-cyclodiphosphate synthase</fullName>
            <shortName evidence="1">MECDP-synthase</shortName>
            <shortName evidence="1">MECPP-synthase</shortName>
            <shortName evidence="1">MECPS</shortName>
            <ecNumber evidence="1">4.6.1.12</ecNumber>
        </recommendedName>
    </domain>
</protein>
<gene>
    <name evidence="1" type="primary">ispDF</name>
    <name type="ordered locus">BR1120</name>
    <name type="ordered locus">BS1330_I1116</name>
</gene>
<evidence type="ECO:0000255" key="1">
    <source>
        <dbReference type="HAMAP-Rule" id="MF_01520"/>
    </source>
</evidence>
<evidence type="ECO:0000305" key="2"/>
<feature type="chain" id="PRO_0000075661" description="Bifunctional enzyme IspD/IspF">
    <location>
        <begin position="1"/>
        <end position="390"/>
    </location>
</feature>
<feature type="region of interest" description="2-C-methyl-D-erythritol 4-phosphate cytidylyltransferase" evidence="1">
    <location>
        <begin position="1"/>
        <end position="229"/>
    </location>
</feature>
<feature type="region of interest" description="2-C-methyl-D-erythritol 2,4-cyclodiphosphate synthase" evidence="1">
    <location>
        <begin position="230"/>
        <end position="390"/>
    </location>
</feature>
<feature type="binding site" evidence="1">
    <location>
        <begin position="236"/>
        <end position="238"/>
    </location>
    <ligand>
        <name>4-CDP-2-C-methyl-D-erythritol 2-phosphate</name>
        <dbReference type="ChEBI" id="CHEBI:57919"/>
    </ligand>
</feature>
<feature type="binding site" evidence="1">
    <location>
        <position position="236"/>
    </location>
    <ligand>
        <name>a divalent metal cation</name>
        <dbReference type="ChEBI" id="CHEBI:60240"/>
    </ligand>
</feature>
<feature type="binding site" evidence="1">
    <location>
        <position position="238"/>
    </location>
    <ligand>
        <name>a divalent metal cation</name>
        <dbReference type="ChEBI" id="CHEBI:60240"/>
    </ligand>
</feature>
<feature type="binding site" evidence="1">
    <location>
        <begin position="262"/>
        <end position="263"/>
    </location>
    <ligand>
        <name>4-CDP-2-C-methyl-D-erythritol 2-phosphate</name>
        <dbReference type="ChEBI" id="CHEBI:57919"/>
    </ligand>
</feature>
<feature type="binding site" evidence="1">
    <location>
        <position position="270"/>
    </location>
    <ligand>
        <name>a divalent metal cation</name>
        <dbReference type="ChEBI" id="CHEBI:60240"/>
    </ligand>
</feature>
<feature type="binding site" evidence="1">
    <location>
        <begin position="284"/>
        <end position="286"/>
    </location>
    <ligand>
        <name>4-CDP-2-C-methyl-D-erythritol 2-phosphate</name>
        <dbReference type="ChEBI" id="CHEBI:57919"/>
    </ligand>
</feature>
<feature type="binding site" evidence="1">
    <location>
        <begin position="360"/>
        <end position="363"/>
    </location>
    <ligand>
        <name>4-CDP-2-C-methyl-D-erythritol 2-phosphate</name>
        <dbReference type="ChEBI" id="CHEBI:57919"/>
    </ligand>
</feature>
<feature type="binding site" evidence="1">
    <location>
        <position position="367"/>
    </location>
    <ligand>
        <name>4-CDP-2-C-methyl-D-erythritol 2-phosphate</name>
        <dbReference type="ChEBI" id="CHEBI:57919"/>
    </ligand>
</feature>
<feature type="binding site" evidence="1">
    <location>
        <position position="370"/>
    </location>
    <ligand>
        <name>4-CDP-2-C-methyl-D-erythritol 2-phosphate</name>
        <dbReference type="ChEBI" id="CHEBI:57919"/>
    </ligand>
</feature>
<feature type="site" description="Transition state stabilizer" evidence="1">
    <location>
        <position position="8"/>
    </location>
</feature>
<feature type="site" description="Transition state stabilizer" evidence="1">
    <location>
        <position position="17"/>
    </location>
</feature>
<feature type="site" description="Positions MEP for the nucleophilic attack" evidence="1">
    <location>
        <position position="148"/>
    </location>
</feature>
<feature type="site" description="Positions MEP for the nucleophilic attack" evidence="1">
    <location>
        <position position="205"/>
    </location>
</feature>
<feature type="site" description="Transition state stabilizer" evidence="1">
    <location>
        <position position="262"/>
    </location>
</feature>
<feature type="site" description="Transition state stabilizer" evidence="1">
    <location>
        <position position="361"/>
    </location>
</feature>